<keyword id="KW-0963">Cytoplasm</keyword>
<keyword id="KW-0251">Elongation factor</keyword>
<keyword id="KW-0648">Protein biosynthesis</keyword>
<feature type="chain" id="PRO_0000094276" description="Elongation factor P">
    <location>
        <begin position="1"/>
        <end position="185"/>
    </location>
</feature>
<protein>
    <recommendedName>
        <fullName evidence="1">Elongation factor P</fullName>
        <shortName evidence="1">EF-P</shortName>
    </recommendedName>
</protein>
<organism>
    <name type="scientific">Listeria monocytogenes serotype 4b (strain F2365)</name>
    <dbReference type="NCBI Taxonomy" id="265669"/>
    <lineage>
        <taxon>Bacteria</taxon>
        <taxon>Bacillati</taxon>
        <taxon>Bacillota</taxon>
        <taxon>Bacilli</taxon>
        <taxon>Bacillales</taxon>
        <taxon>Listeriaceae</taxon>
        <taxon>Listeria</taxon>
    </lineage>
</organism>
<evidence type="ECO:0000255" key="1">
    <source>
        <dbReference type="HAMAP-Rule" id="MF_00141"/>
    </source>
</evidence>
<proteinExistence type="inferred from homology"/>
<accession>Q71ZW7</accession>
<sequence length="185" mass="20465">MISVNDFKTGLTIEVDNGIWRVLDFQHVKPGKGAAFVRSKLRNLRTGAIQEKTFRGGEKVAKAQIDNRKMAYLYADGTNHVFMDNESYEQIELPEDQIAHELKFLKENMEINIIMYQGETIGIDLPNTVELVVTATDPGIKGDTSSGGSKPATLETGLVVQVPFFVNEGDKLVINTTEAAYVSRA</sequence>
<gene>
    <name evidence="1" type="primary">efp</name>
    <name type="ordered locus">LMOf2365_1372</name>
</gene>
<reference key="1">
    <citation type="journal article" date="2004" name="Nucleic Acids Res.">
        <title>Whole genome comparisons of serotype 4b and 1/2a strains of the food-borne pathogen Listeria monocytogenes reveal new insights into the core genome components of this species.</title>
        <authorList>
            <person name="Nelson K.E."/>
            <person name="Fouts D.E."/>
            <person name="Mongodin E.F."/>
            <person name="Ravel J."/>
            <person name="DeBoy R.T."/>
            <person name="Kolonay J.F."/>
            <person name="Rasko D.A."/>
            <person name="Angiuoli S.V."/>
            <person name="Gill S.R."/>
            <person name="Paulsen I.T."/>
            <person name="Peterson J.D."/>
            <person name="White O."/>
            <person name="Nelson W.C."/>
            <person name="Nierman W.C."/>
            <person name="Beanan M.J."/>
            <person name="Brinkac L.M."/>
            <person name="Daugherty S.C."/>
            <person name="Dodson R.J."/>
            <person name="Durkin A.S."/>
            <person name="Madupu R."/>
            <person name="Haft D.H."/>
            <person name="Selengut J."/>
            <person name="Van Aken S.E."/>
            <person name="Khouri H.M."/>
            <person name="Fedorova N."/>
            <person name="Forberger H.A."/>
            <person name="Tran B."/>
            <person name="Kathariou S."/>
            <person name="Wonderling L.D."/>
            <person name="Uhlich G.A."/>
            <person name="Bayles D.O."/>
            <person name="Luchansky J.B."/>
            <person name="Fraser C.M."/>
        </authorList>
    </citation>
    <scope>NUCLEOTIDE SEQUENCE [LARGE SCALE GENOMIC DNA]</scope>
    <source>
        <strain>F2365</strain>
    </source>
</reference>
<name>EFP_LISMF</name>
<comment type="function">
    <text evidence="1">Involved in peptide bond synthesis. Stimulates efficient translation and peptide-bond synthesis on native or reconstituted 70S ribosomes in vitro. Probably functions indirectly by altering the affinity of the ribosome for aminoacyl-tRNA, thus increasing their reactivity as acceptors for peptidyl transferase.</text>
</comment>
<comment type="pathway">
    <text evidence="1">Protein biosynthesis; polypeptide chain elongation.</text>
</comment>
<comment type="subcellular location">
    <subcellularLocation>
        <location evidence="1">Cytoplasm</location>
    </subcellularLocation>
</comment>
<comment type="similarity">
    <text evidence="1">Belongs to the elongation factor P family.</text>
</comment>
<dbReference type="EMBL" id="AE017262">
    <property type="protein sequence ID" value="AAT04147.1"/>
    <property type="molecule type" value="Genomic_DNA"/>
</dbReference>
<dbReference type="RefSeq" id="WP_003722482.1">
    <property type="nucleotide sequence ID" value="NC_002973.6"/>
</dbReference>
<dbReference type="SMR" id="Q71ZW7"/>
<dbReference type="GeneID" id="93234772"/>
<dbReference type="KEGG" id="lmf:LMOf2365_1372"/>
<dbReference type="HOGENOM" id="CLU_074944_0_1_9"/>
<dbReference type="UniPathway" id="UPA00345"/>
<dbReference type="GO" id="GO:0005737">
    <property type="term" value="C:cytoplasm"/>
    <property type="evidence" value="ECO:0007669"/>
    <property type="project" value="UniProtKB-SubCell"/>
</dbReference>
<dbReference type="GO" id="GO:0003746">
    <property type="term" value="F:translation elongation factor activity"/>
    <property type="evidence" value="ECO:0007669"/>
    <property type="project" value="UniProtKB-UniRule"/>
</dbReference>
<dbReference type="GO" id="GO:0043043">
    <property type="term" value="P:peptide biosynthetic process"/>
    <property type="evidence" value="ECO:0007669"/>
    <property type="project" value="InterPro"/>
</dbReference>
<dbReference type="CDD" id="cd04470">
    <property type="entry name" value="S1_EF-P_repeat_1"/>
    <property type="match status" value="1"/>
</dbReference>
<dbReference type="CDD" id="cd05794">
    <property type="entry name" value="S1_EF-P_repeat_2"/>
    <property type="match status" value="1"/>
</dbReference>
<dbReference type="FunFam" id="2.30.30.30:FF:000010">
    <property type="entry name" value="Elongation factor P"/>
    <property type="match status" value="1"/>
</dbReference>
<dbReference type="FunFam" id="2.40.50.140:FF:000004">
    <property type="entry name" value="Elongation factor P"/>
    <property type="match status" value="1"/>
</dbReference>
<dbReference type="FunFam" id="2.40.50.140:FF:000009">
    <property type="entry name" value="Elongation factor P"/>
    <property type="match status" value="1"/>
</dbReference>
<dbReference type="Gene3D" id="2.30.30.30">
    <property type="match status" value="1"/>
</dbReference>
<dbReference type="Gene3D" id="2.40.50.140">
    <property type="entry name" value="Nucleic acid-binding proteins"/>
    <property type="match status" value="2"/>
</dbReference>
<dbReference type="HAMAP" id="MF_00141">
    <property type="entry name" value="EF_P"/>
    <property type="match status" value="1"/>
</dbReference>
<dbReference type="InterPro" id="IPR015365">
    <property type="entry name" value="Elong-fact-P_C"/>
</dbReference>
<dbReference type="InterPro" id="IPR012340">
    <property type="entry name" value="NA-bd_OB-fold"/>
</dbReference>
<dbReference type="InterPro" id="IPR014722">
    <property type="entry name" value="Rib_uL2_dom2"/>
</dbReference>
<dbReference type="InterPro" id="IPR020599">
    <property type="entry name" value="Transl_elong_fac_P/YeiP"/>
</dbReference>
<dbReference type="InterPro" id="IPR013185">
    <property type="entry name" value="Transl_elong_KOW-like"/>
</dbReference>
<dbReference type="InterPro" id="IPR001059">
    <property type="entry name" value="Transl_elong_P/YeiP_cen"/>
</dbReference>
<dbReference type="InterPro" id="IPR013852">
    <property type="entry name" value="Transl_elong_P/YeiP_CS"/>
</dbReference>
<dbReference type="InterPro" id="IPR011768">
    <property type="entry name" value="Transl_elongation_fac_P"/>
</dbReference>
<dbReference type="InterPro" id="IPR008991">
    <property type="entry name" value="Translation_prot_SH3-like_sf"/>
</dbReference>
<dbReference type="NCBIfam" id="TIGR00038">
    <property type="entry name" value="efp"/>
    <property type="match status" value="1"/>
</dbReference>
<dbReference type="NCBIfam" id="NF001810">
    <property type="entry name" value="PRK00529.1"/>
    <property type="match status" value="1"/>
</dbReference>
<dbReference type="PANTHER" id="PTHR30053">
    <property type="entry name" value="ELONGATION FACTOR P"/>
    <property type="match status" value="1"/>
</dbReference>
<dbReference type="PANTHER" id="PTHR30053:SF12">
    <property type="entry name" value="ELONGATION FACTOR P (EF-P) FAMILY PROTEIN"/>
    <property type="match status" value="1"/>
</dbReference>
<dbReference type="Pfam" id="PF01132">
    <property type="entry name" value="EFP"/>
    <property type="match status" value="1"/>
</dbReference>
<dbReference type="Pfam" id="PF08207">
    <property type="entry name" value="EFP_N"/>
    <property type="match status" value="1"/>
</dbReference>
<dbReference type="Pfam" id="PF09285">
    <property type="entry name" value="Elong-fact-P_C"/>
    <property type="match status" value="1"/>
</dbReference>
<dbReference type="PIRSF" id="PIRSF005901">
    <property type="entry name" value="EF-P"/>
    <property type="match status" value="1"/>
</dbReference>
<dbReference type="SMART" id="SM01185">
    <property type="entry name" value="EFP"/>
    <property type="match status" value="1"/>
</dbReference>
<dbReference type="SMART" id="SM00841">
    <property type="entry name" value="Elong-fact-P_C"/>
    <property type="match status" value="1"/>
</dbReference>
<dbReference type="SUPFAM" id="SSF50249">
    <property type="entry name" value="Nucleic acid-binding proteins"/>
    <property type="match status" value="2"/>
</dbReference>
<dbReference type="SUPFAM" id="SSF50104">
    <property type="entry name" value="Translation proteins SH3-like domain"/>
    <property type="match status" value="1"/>
</dbReference>
<dbReference type="PROSITE" id="PS01275">
    <property type="entry name" value="EFP"/>
    <property type="match status" value="1"/>
</dbReference>